<comment type="function">
    <text evidence="1 5">E3 ubiquitin-protein ligase involved in DNA damage response by promoting DNA resection and homologous recombination. Recruited to sites of double-strand breaks following DNA damage and specifically promotes double-strand break repair via homologous recombination (By similarity). Together with nlk.2, involved in the ubiquitination and degradation of TCF/LEF. Also exhibits auto-ubiquitination activity in combination with ube2k. May act as a negative regulator in the Wnt/beta-catenin-mediated signaling pathway (PubMed:16714285).</text>
</comment>
<comment type="catalytic activity">
    <reaction evidence="7">
        <text>S-ubiquitinyl-[E2 ubiquitin-conjugating enzyme]-L-cysteine + [acceptor protein]-L-lysine = [E2 ubiquitin-conjugating enzyme]-L-cysteine + N(6)-ubiquitinyl-[acceptor protein]-L-lysine.</text>
        <dbReference type="EC" id="2.3.2.27"/>
    </reaction>
</comment>
<comment type="pathway">
    <text evidence="5">Protein modification; protein ubiquitination.</text>
</comment>
<comment type="subunit">
    <text evidence="5">Interacts with nlk.2 (via C-terminus) and ube2k.</text>
</comment>
<comment type="subcellular location">
    <subcellularLocation>
        <location evidence="1">Chromosome</location>
    </subcellularLocation>
    <text evidence="1">Recruited at DNA damage sites. Localizes to sites of double-strand break: localization to double-strand break sites is mediated by the zinc fingers.</text>
</comment>
<comment type="domain">
    <text evidence="1">The zinc finger domains (C2H2-type and C2HC-type zinc fingers) bind DNA and mediate recruitment to double-strand break sites. They show strong preference for DNA with 5'- or 3'-single-stranded overhangs, while they do not bind blunt-ended double-stranded DNA or poly(ADP-ribose) (PAR) polymers.</text>
</comment>
<comment type="PTM">
    <text evidence="5">Auto-ubiquitinated.</text>
</comment>
<sequence length="222" mass="25480">MAEAMSCSSEITEEFLCPVCQEILQTPVRTQTCRHVFCRKCFMLAMKSGGAYCPLCRGPVNKSERSAPVRATDIDLEMRMLSGGCMYCGKMMKLHYMKLHYKSCRKYQEEYGLSPKNVTIQTGQNSTKCQEPKYKCPLCSEHNLNQRSLLEHCNNVHYYEEVEMVCPICATLPWGDPIQTTGNVIAHLNARHQFNYQEFMNINIDEEAQFQIAVANSYKISR</sequence>
<organism>
    <name type="scientific">Xenopus laevis</name>
    <name type="common">African clawed frog</name>
    <dbReference type="NCBI Taxonomy" id="8355"/>
    <lineage>
        <taxon>Eukaryota</taxon>
        <taxon>Metazoa</taxon>
        <taxon>Chordata</taxon>
        <taxon>Craniata</taxon>
        <taxon>Vertebrata</taxon>
        <taxon>Euteleostomi</taxon>
        <taxon>Amphibia</taxon>
        <taxon>Batrachia</taxon>
        <taxon>Anura</taxon>
        <taxon>Pipoidea</taxon>
        <taxon>Pipidae</taxon>
        <taxon>Xenopodinae</taxon>
        <taxon>Xenopus</taxon>
        <taxon>Xenopus</taxon>
    </lineage>
</organism>
<accession>Q1L721</accession>
<gene>
    <name type="primary">rnf138</name>
    <name evidence="6" type="synonym">narf</name>
</gene>
<name>RN138_XENLA</name>
<evidence type="ECO:0000250" key="1">
    <source>
        <dbReference type="UniProtKB" id="Q8WVD3"/>
    </source>
</evidence>
<evidence type="ECO:0000255" key="2">
    <source>
        <dbReference type="PROSITE-ProRule" id="PRU00042"/>
    </source>
</evidence>
<evidence type="ECO:0000255" key="3">
    <source>
        <dbReference type="PROSITE-ProRule" id="PRU00175"/>
    </source>
</evidence>
<evidence type="ECO:0000255" key="4">
    <source>
        <dbReference type="PROSITE-ProRule" id="PRU01144"/>
    </source>
</evidence>
<evidence type="ECO:0000269" key="5">
    <source>
    </source>
</evidence>
<evidence type="ECO:0000303" key="6">
    <source>
    </source>
</evidence>
<evidence type="ECO:0000305" key="7"/>
<feature type="chain" id="PRO_0000261610" description="E3 ubiquitin-protein ligase RNF138">
    <location>
        <begin position="1"/>
        <end position="222"/>
    </location>
</feature>
<feature type="domain" description="UIM" evidence="1">
    <location>
        <begin position="202"/>
        <end position="220"/>
    </location>
</feature>
<feature type="zinc finger region" description="RING-type" evidence="3">
    <location>
        <begin position="17"/>
        <end position="57"/>
    </location>
</feature>
<feature type="zinc finger region" description="C2HC RNF-type" evidence="4">
    <location>
        <begin position="85"/>
        <end position="104"/>
    </location>
</feature>
<feature type="zinc finger region" description="C2H2-type 1" evidence="2">
    <location>
        <begin position="134"/>
        <end position="157"/>
    </location>
</feature>
<feature type="zinc finger region" description="C2H2-type 2" evidence="1">
    <location>
        <begin position="164"/>
        <end position="192"/>
    </location>
</feature>
<feature type="binding site" evidence="4">
    <location>
        <position position="85"/>
    </location>
    <ligand>
        <name>Zn(2+)</name>
        <dbReference type="ChEBI" id="CHEBI:29105"/>
    </ligand>
</feature>
<feature type="binding site" evidence="4">
    <location>
        <position position="88"/>
    </location>
    <ligand>
        <name>Zn(2+)</name>
        <dbReference type="ChEBI" id="CHEBI:29105"/>
    </ligand>
</feature>
<feature type="binding site" evidence="4">
    <location>
        <position position="100"/>
    </location>
    <ligand>
        <name>Zn(2+)</name>
        <dbReference type="ChEBI" id="CHEBI:29105"/>
    </ligand>
</feature>
<feature type="binding site" evidence="4">
    <location>
        <position position="104"/>
    </location>
    <ligand>
        <name>Zn(2+)</name>
        <dbReference type="ChEBI" id="CHEBI:29105"/>
    </ligand>
</feature>
<feature type="mutagenesis site" description="Prevents ubiquitination and auto-ubiquitination; when associated with A-53." evidence="5">
    <original>C</original>
    <variation>A</variation>
    <location>
        <position position="17"/>
    </location>
</feature>
<feature type="mutagenesis site" description="Prevents ubiquitination and auto-ubiquitination; when associated with A-17." evidence="5">
    <original>C</original>
    <variation>A</variation>
    <location>
        <position position="53"/>
    </location>
</feature>
<dbReference type="EC" id="2.3.2.27" evidence="7"/>
<dbReference type="EMBL" id="DQ011285">
    <property type="protein sequence ID" value="AAY68290.1"/>
    <property type="molecule type" value="mRNA"/>
</dbReference>
<dbReference type="RefSeq" id="NP_001089974.1">
    <property type="nucleotide sequence ID" value="NM_001096505.1"/>
</dbReference>
<dbReference type="BioGRID" id="592826">
    <property type="interactions" value="3"/>
</dbReference>
<dbReference type="DNASU" id="735045"/>
<dbReference type="GeneID" id="735045"/>
<dbReference type="KEGG" id="xla:735045"/>
<dbReference type="AGR" id="Xenbase:XB-GENE-1001378"/>
<dbReference type="CTD" id="735045"/>
<dbReference type="Xenbase" id="XB-GENE-1001378">
    <property type="gene designation" value="rnf138.S"/>
</dbReference>
<dbReference type="OrthoDB" id="7873042at2759"/>
<dbReference type="UniPathway" id="UPA00143"/>
<dbReference type="Proteomes" id="UP000186698">
    <property type="component" value="Chromosome 6S"/>
</dbReference>
<dbReference type="Bgee" id="735045">
    <property type="expression patterns" value="Expressed in egg cell and 9 other cell types or tissues"/>
</dbReference>
<dbReference type="GO" id="GO:0005634">
    <property type="term" value="C:nucleus"/>
    <property type="evidence" value="ECO:0007669"/>
    <property type="project" value="TreeGrafter"/>
</dbReference>
<dbReference type="GO" id="GO:0035861">
    <property type="term" value="C:site of double-strand break"/>
    <property type="evidence" value="ECO:0000250"/>
    <property type="project" value="UniProtKB"/>
</dbReference>
<dbReference type="GO" id="GO:0019901">
    <property type="term" value="F:protein kinase binding"/>
    <property type="evidence" value="ECO:0000353"/>
    <property type="project" value="UniProtKB"/>
</dbReference>
<dbReference type="GO" id="GO:0003697">
    <property type="term" value="F:single-stranded DNA binding"/>
    <property type="evidence" value="ECO:0000250"/>
    <property type="project" value="UniProtKB"/>
</dbReference>
<dbReference type="GO" id="GO:0031624">
    <property type="term" value="F:ubiquitin conjugating enzyme binding"/>
    <property type="evidence" value="ECO:0000353"/>
    <property type="project" value="UniProtKB"/>
</dbReference>
<dbReference type="GO" id="GO:0061630">
    <property type="term" value="F:ubiquitin protein ligase activity"/>
    <property type="evidence" value="ECO:0000250"/>
    <property type="project" value="UniProtKB"/>
</dbReference>
<dbReference type="GO" id="GO:0008270">
    <property type="term" value="F:zinc ion binding"/>
    <property type="evidence" value="ECO:0007669"/>
    <property type="project" value="UniProtKB-KW"/>
</dbReference>
<dbReference type="GO" id="GO:0010792">
    <property type="term" value="P:DNA double-strand break processing involved in repair via single-strand annealing"/>
    <property type="evidence" value="ECO:0000250"/>
    <property type="project" value="UniProtKB"/>
</dbReference>
<dbReference type="GO" id="GO:0000724">
    <property type="term" value="P:double-strand break repair via homologous recombination"/>
    <property type="evidence" value="ECO:0000250"/>
    <property type="project" value="UniProtKB"/>
</dbReference>
<dbReference type="GO" id="GO:0051865">
    <property type="term" value="P:protein autoubiquitination"/>
    <property type="evidence" value="ECO:0000314"/>
    <property type="project" value="UniProtKB"/>
</dbReference>
<dbReference type="GO" id="GO:0006511">
    <property type="term" value="P:ubiquitin-dependent protein catabolic process"/>
    <property type="evidence" value="ECO:0000315"/>
    <property type="project" value="UniProtKB"/>
</dbReference>
<dbReference type="GO" id="GO:0016055">
    <property type="term" value="P:Wnt signaling pathway"/>
    <property type="evidence" value="ECO:0007669"/>
    <property type="project" value="UniProtKB-KW"/>
</dbReference>
<dbReference type="CDD" id="cd16544">
    <property type="entry name" value="RING-HC_RNF138"/>
    <property type="match status" value="1"/>
</dbReference>
<dbReference type="FunFam" id="3.30.40.10:FF:000267">
    <property type="entry name" value="E3 ubiquitin-protein ligase RNF138 isoform X1"/>
    <property type="match status" value="1"/>
</dbReference>
<dbReference type="Gene3D" id="3.30.40.10">
    <property type="entry name" value="Zinc/RING finger domain, C3HC4 (zinc finger)"/>
    <property type="match status" value="1"/>
</dbReference>
<dbReference type="InterPro" id="IPR008598">
    <property type="entry name" value="Di19_Zn-bd"/>
</dbReference>
<dbReference type="InterPro" id="IPR052498">
    <property type="entry name" value="E3_ubiq-protein_ligase_RNF138"/>
</dbReference>
<dbReference type="InterPro" id="IPR034734">
    <property type="entry name" value="ZF_C2HC_RNF"/>
</dbReference>
<dbReference type="InterPro" id="IPR001841">
    <property type="entry name" value="Znf_RING"/>
</dbReference>
<dbReference type="InterPro" id="IPR013083">
    <property type="entry name" value="Znf_RING/FYVE/PHD"/>
</dbReference>
<dbReference type="PANTHER" id="PTHR46968">
    <property type="entry name" value="E3 UBIQUITIN-PROTEIN LIGASE RNF138"/>
    <property type="match status" value="1"/>
</dbReference>
<dbReference type="PANTHER" id="PTHR46968:SF2">
    <property type="entry name" value="E3 UBIQUITIN-PROTEIN LIGASE RNF138"/>
    <property type="match status" value="1"/>
</dbReference>
<dbReference type="Pfam" id="PF13923">
    <property type="entry name" value="zf-C3HC4_2"/>
    <property type="match status" value="1"/>
</dbReference>
<dbReference type="Pfam" id="PF05605">
    <property type="entry name" value="zf-Di19"/>
    <property type="match status" value="1"/>
</dbReference>
<dbReference type="SMART" id="SM00184">
    <property type="entry name" value="RING"/>
    <property type="match status" value="1"/>
</dbReference>
<dbReference type="SUPFAM" id="SSF57850">
    <property type="entry name" value="RING/U-box"/>
    <property type="match status" value="1"/>
</dbReference>
<dbReference type="PROSITE" id="PS51803">
    <property type="entry name" value="ZF_C2HC_RNF"/>
    <property type="match status" value="1"/>
</dbReference>
<dbReference type="PROSITE" id="PS50089">
    <property type="entry name" value="ZF_RING_2"/>
    <property type="match status" value="1"/>
</dbReference>
<protein>
    <recommendedName>
        <fullName>E3 ubiquitin-protein ligase RNF138</fullName>
        <ecNumber evidence="7">2.3.2.27</ecNumber>
    </recommendedName>
    <alternativeName>
        <fullName evidence="6">Nemo-like kinase-associated RING finger protein</fullName>
        <shortName evidence="6">NLK-associated RING finger protein</shortName>
        <shortName evidence="6">xNARF</shortName>
    </alternativeName>
    <alternativeName>
        <fullName>RING finger protein 138</fullName>
    </alternativeName>
    <alternativeName>
        <fullName evidence="7">RING-type E3 ubiquitin transferase RNF138</fullName>
    </alternativeName>
</protein>
<proteinExistence type="evidence at protein level"/>
<reference key="1">
    <citation type="journal article" date="2006" name="J. Biol. Chem.">
        <title>NARF, an nemo-like kinase (NLK)-associated ring finger protein regulates the ubiquitylation and degradation of T cell factor/lymphoid enhancer factor (TCF/LEF).</title>
        <authorList>
            <person name="Yamada M."/>
            <person name="Ohnishi J."/>
            <person name="Ohkawara B."/>
            <person name="Iemura S."/>
            <person name="Satoh K."/>
            <person name="Hyodo-Miura J."/>
            <person name="Kawachi K."/>
            <person name="Natsume T."/>
            <person name="Shibuya H."/>
        </authorList>
    </citation>
    <scope>NUCLEOTIDE SEQUENCE [MRNA]</scope>
    <scope>FUNCTION</scope>
    <scope>INTERACTION WITH NLK.2 AND UBE2K</scope>
    <scope>DOMAIN</scope>
    <scope>MUTAGENESIS OF CYS-17 AND CYS-53</scope>
    <source>
        <tissue>Oocyte</tissue>
    </source>
</reference>
<keyword id="KW-0158">Chromosome</keyword>
<keyword id="KW-0227">DNA damage</keyword>
<keyword id="KW-0234">DNA repair</keyword>
<keyword id="KW-0238">DNA-binding</keyword>
<keyword id="KW-0479">Metal-binding</keyword>
<keyword id="KW-1185">Reference proteome</keyword>
<keyword id="KW-0677">Repeat</keyword>
<keyword id="KW-0808">Transferase</keyword>
<keyword id="KW-0832">Ubl conjugation</keyword>
<keyword id="KW-0833">Ubl conjugation pathway</keyword>
<keyword id="KW-0879">Wnt signaling pathway</keyword>
<keyword id="KW-0862">Zinc</keyword>
<keyword id="KW-0863">Zinc-finger</keyword>